<organism>
    <name type="scientific">Shigella dysenteriae serotype 1 (strain Sd197)</name>
    <dbReference type="NCBI Taxonomy" id="300267"/>
    <lineage>
        <taxon>Bacteria</taxon>
        <taxon>Pseudomonadati</taxon>
        <taxon>Pseudomonadota</taxon>
        <taxon>Gammaproteobacteria</taxon>
        <taxon>Enterobacterales</taxon>
        <taxon>Enterobacteriaceae</taxon>
        <taxon>Shigella</taxon>
    </lineage>
</organism>
<accession>Q328H3</accession>
<feature type="chain" id="PRO_1000045560" description="Fumarate reductase subunit D">
    <location>
        <begin position="1"/>
        <end position="119"/>
    </location>
</feature>
<feature type="transmembrane region" description="Helical" evidence="1">
    <location>
        <begin position="26"/>
        <end position="46"/>
    </location>
</feature>
<feature type="transmembrane region" description="Helical" evidence="1">
    <location>
        <begin position="55"/>
        <end position="75"/>
    </location>
</feature>
<feature type="transmembrane region" description="Helical" evidence="1">
    <location>
        <begin position="99"/>
        <end position="119"/>
    </location>
</feature>
<dbReference type="EMBL" id="CP000034">
    <property type="protein sequence ID" value="ABB64282.1"/>
    <property type="molecule type" value="Genomic_DNA"/>
</dbReference>
<dbReference type="RefSeq" id="WP_000609663.1">
    <property type="nucleotide sequence ID" value="NC_007606.1"/>
</dbReference>
<dbReference type="RefSeq" id="YP_405773.1">
    <property type="nucleotide sequence ID" value="NC_007606.1"/>
</dbReference>
<dbReference type="SMR" id="Q328H3"/>
<dbReference type="STRING" id="300267.SDY_4395"/>
<dbReference type="EnsemblBacteria" id="ABB64282">
    <property type="protein sequence ID" value="ABB64282"/>
    <property type="gene ID" value="SDY_4395"/>
</dbReference>
<dbReference type="GeneID" id="75169672"/>
<dbReference type="KEGG" id="sdy:SDY_4395"/>
<dbReference type="PATRIC" id="fig|300267.13.peg.5191"/>
<dbReference type="HOGENOM" id="CLU_168367_0_0_6"/>
<dbReference type="Proteomes" id="UP000002716">
    <property type="component" value="Chromosome"/>
</dbReference>
<dbReference type="GO" id="GO:0045283">
    <property type="term" value="C:fumarate reductase complex"/>
    <property type="evidence" value="ECO:0007669"/>
    <property type="project" value="UniProtKB-UniRule"/>
</dbReference>
<dbReference type="GO" id="GO:0005886">
    <property type="term" value="C:plasma membrane"/>
    <property type="evidence" value="ECO:0007669"/>
    <property type="project" value="UniProtKB-SubCell"/>
</dbReference>
<dbReference type="GO" id="GO:0000104">
    <property type="term" value="F:succinate dehydrogenase activity"/>
    <property type="evidence" value="ECO:0007669"/>
    <property type="project" value="UniProtKB-UniRule"/>
</dbReference>
<dbReference type="GO" id="GO:0006106">
    <property type="term" value="P:fumarate metabolic process"/>
    <property type="evidence" value="ECO:0007669"/>
    <property type="project" value="InterPro"/>
</dbReference>
<dbReference type="CDD" id="cd00547">
    <property type="entry name" value="QFR_TypeD_subunitD"/>
    <property type="match status" value="1"/>
</dbReference>
<dbReference type="FunFam" id="1.20.1300.10:FF:000002">
    <property type="entry name" value="Fumarate reductase subunit D"/>
    <property type="match status" value="1"/>
</dbReference>
<dbReference type="Gene3D" id="1.20.1300.10">
    <property type="entry name" value="Fumarate reductase/succinate dehydrogenase, transmembrane subunit"/>
    <property type="match status" value="1"/>
</dbReference>
<dbReference type="HAMAP" id="MF_00709">
    <property type="entry name" value="Fumarate_red_D"/>
    <property type="match status" value="1"/>
</dbReference>
<dbReference type="InterPro" id="IPR003418">
    <property type="entry name" value="Fumarate_red_D"/>
</dbReference>
<dbReference type="InterPro" id="IPR034804">
    <property type="entry name" value="SQR/QFR_C/D"/>
</dbReference>
<dbReference type="NCBIfam" id="NF003977">
    <property type="entry name" value="PRK05470.1-1"/>
    <property type="match status" value="1"/>
</dbReference>
<dbReference type="Pfam" id="PF02313">
    <property type="entry name" value="Fumarate_red_D"/>
    <property type="match status" value="1"/>
</dbReference>
<dbReference type="PIRSF" id="PIRSF000179">
    <property type="entry name" value="FrdD"/>
    <property type="match status" value="1"/>
</dbReference>
<dbReference type="SUPFAM" id="SSF81343">
    <property type="entry name" value="Fumarate reductase respiratory complex transmembrane subunits"/>
    <property type="match status" value="1"/>
</dbReference>
<gene>
    <name evidence="1" type="primary">frdD</name>
    <name type="ordered locus">SDY_4395</name>
</gene>
<comment type="function">
    <text evidence="1">Two distinct, membrane-bound, FAD-containing enzymes are responsible for the catalysis of fumarate and succinate interconversion; fumarate reductase is used in anaerobic growth, and succinate dehydrogenase is used in aerobic growth. Anchors the catalytic components of the fumarate reductase complex to the cell inner membrane, binds quinones.</text>
</comment>
<comment type="subunit">
    <text evidence="1">Part of an enzyme complex containing four subunits: a flavoprotein (FrdA), an iron-sulfur protein (FrdB), and two hydrophobic anchor proteins (FrdC and FrdD).</text>
</comment>
<comment type="subcellular location">
    <subcellularLocation>
        <location evidence="1">Cell inner membrane</location>
        <topology evidence="1">Multi-pass membrane protein</topology>
    </subcellularLocation>
</comment>
<comment type="similarity">
    <text evidence="1">Belongs to the FrdD family.</text>
</comment>
<evidence type="ECO:0000255" key="1">
    <source>
        <dbReference type="HAMAP-Rule" id="MF_00709"/>
    </source>
</evidence>
<name>FRDD_SHIDS</name>
<sequence length="119" mass="13107">MINPNPKRSDEPVFWGLFGAGGMWSAIIAPVMILLVGILLPLGLFPGDALSYERVLAFAQSFIGRVFLFLMIVLPLWCGLHRMHHAMHDLKIHVPAGKWVFYGLAAILTVVTLIGVVTI</sequence>
<protein>
    <recommendedName>
        <fullName evidence="1">Fumarate reductase subunit D</fullName>
    </recommendedName>
    <alternativeName>
        <fullName evidence="1">Fumarate reductase 13 kDa hydrophobic protein</fullName>
    </alternativeName>
    <alternativeName>
        <fullName evidence="1">Quinol-fumarate reductase subunit D</fullName>
        <shortName evidence="1">QFR subunit D</shortName>
    </alternativeName>
</protein>
<keyword id="KW-0997">Cell inner membrane</keyword>
<keyword id="KW-1003">Cell membrane</keyword>
<keyword id="KW-0472">Membrane</keyword>
<keyword id="KW-1185">Reference proteome</keyword>
<keyword id="KW-0812">Transmembrane</keyword>
<keyword id="KW-1133">Transmembrane helix</keyword>
<proteinExistence type="inferred from homology"/>
<reference key="1">
    <citation type="journal article" date="2005" name="Nucleic Acids Res.">
        <title>Genome dynamics and diversity of Shigella species, the etiologic agents of bacillary dysentery.</title>
        <authorList>
            <person name="Yang F."/>
            <person name="Yang J."/>
            <person name="Zhang X."/>
            <person name="Chen L."/>
            <person name="Jiang Y."/>
            <person name="Yan Y."/>
            <person name="Tang X."/>
            <person name="Wang J."/>
            <person name="Xiong Z."/>
            <person name="Dong J."/>
            <person name="Xue Y."/>
            <person name="Zhu Y."/>
            <person name="Xu X."/>
            <person name="Sun L."/>
            <person name="Chen S."/>
            <person name="Nie H."/>
            <person name="Peng J."/>
            <person name="Xu J."/>
            <person name="Wang Y."/>
            <person name="Yuan Z."/>
            <person name="Wen Y."/>
            <person name="Yao Z."/>
            <person name="Shen Y."/>
            <person name="Qiang B."/>
            <person name="Hou Y."/>
            <person name="Yu J."/>
            <person name="Jin Q."/>
        </authorList>
    </citation>
    <scope>NUCLEOTIDE SEQUENCE [LARGE SCALE GENOMIC DNA]</scope>
    <source>
        <strain>Sd197</strain>
    </source>
</reference>